<name>IBPB_ECOHS</name>
<organism>
    <name type="scientific">Escherichia coli O9:H4 (strain HS)</name>
    <dbReference type="NCBI Taxonomy" id="331112"/>
    <lineage>
        <taxon>Bacteria</taxon>
        <taxon>Pseudomonadati</taxon>
        <taxon>Pseudomonadota</taxon>
        <taxon>Gammaproteobacteria</taxon>
        <taxon>Enterobacterales</taxon>
        <taxon>Enterobacteriaceae</taxon>
        <taxon>Escherichia</taxon>
    </lineage>
</organism>
<accession>A8A6E6</accession>
<comment type="function">
    <text evidence="1">Associates with aggregated proteins, together with IbpA, to stabilize and protect them from irreversible denaturation and extensive proteolysis during heat shock and oxidative stress. Aggregated proteins bound to the IbpAB complex are more efficiently refolded and reactivated by the ATP-dependent chaperone systems ClpB and DnaK/DnaJ/GrpE. Its activity is ATP-independent.</text>
</comment>
<comment type="subunit">
    <text evidence="1">Homodimer. Forms homomultimers of about 100-150 subunits at optimal growth temperatures. Conformation changes to oligomers at high temperatures or high ionic concentrations. The decrease in size of the multimers is accompanied by an increase in chaperone activity.</text>
</comment>
<comment type="subcellular location">
    <subcellularLocation>
        <location evidence="1">Cytoplasm</location>
    </subcellularLocation>
</comment>
<comment type="domain">
    <text evidence="1">The N- and C-terminal flexible termini are involved in oligomerization and in the binding of non-native substrate proteins, and are essential for chaperone activity.</text>
</comment>
<comment type="similarity">
    <text evidence="1 2">Belongs to the small heat shock protein (HSP20) family.</text>
</comment>
<feature type="chain" id="PRO_1000070881" description="Small heat shock protein IbpB">
    <location>
        <begin position="1"/>
        <end position="142"/>
    </location>
</feature>
<feature type="domain" description="sHSP" evidence="2">
    <location>
        <begin position="26"/>
        <end position="137"/>
    </location>
</feature>
<dbReference type="EMBL" id="CP000802">
    <property type="protein sequence ID" value="ABV08100.1"/>
    <property type="molecule type" value="Genomic_DNA"/>
</dbReference>
<dbReference type="RefSeq" id="WP_001243431.1">
    <property type="nucleotide sequence ID" value="NC_009800.1"/>
</dbReference>
<dbReference type="SMR" id="A8A6E6"/>
<dbReference type="GeneID" id="93778427"/>
<dbReference type="KEGG" id="ecx:EcHS_A3898"/>
<dbReference type="HOGENOM" id="CLU_046737_4_2_6"/>
<dbReference type="GO" id="GO:0005737">
    <property type="term" value="C:cytoplasm"/>
    <property type="evidence" value="ECO:0007669"/>
    <property type="project" value="UniProtKB-SubCell"/>
</dbReference>
<dbReference type="GO" id="GO:0050821">
    <property type="term" value="P:protein stabilization"/>
    <property type="evidence" value="ECO:0007669"/>
    <property type="project" value="UniProtKB-UniRule"/>
</dbReference>
<dbReference type="CDD" id="cd06470">
    <property type="entry name" value="ACD_IbpA-B_like"/>
    <property type="match status" value="1"/>
</dbReference>
<dbReference type="FunFam" id="2.60.40.790:FF:000005">
    <property type="entry name" value="Small heat shock protein IbpB"/>
    <property type="match status" value="1"/>
</dbReference>
<dbReference type="Gene3D" id="2.60.40.790">
    <property type="match status" value="1"/>
</dbReference>
<dbReference type="HAMAP" id="MF_02001">
    <property type="entry name" value="HSP20_IbpB"/>
    <property type="match status" value="1"/>
</dbReference>
<dbReference type="InterPro" id="IPR002068">
    <property type="entry name" value="A-crystallin/Hsp20_dom"/>
</dbReference>
<dbReference type="InterPro" id="IPR037913">
    <property type="entry name" value="ACD_IbpA/B"/>
</dbReference>
<dbReference type="InterPro" id="IPR008978">
    <property type="entry name" value="HSP20-like_chaperone"/>
</dbReference>
<dbReference type="InterPro" id="IPR022848">
    <property type="entry name" value="HSP20_IbpB"/>
</dbReference>
<dbReference type="NCBIfam" id="NF008618">
    <property type="entry name" value="PRK11597.1"/>
    <property type="match status" value="1"/>
</dbReference>
<dbReference type="PANTHER" id="PTHR47062">
    <property type="match status" value="1"/>
</dbReference>
<dbReference type="PANTHER" id="PTHR47062:SF2">
    <property type="entry name" value="SMALL HEAT SHOCK PROTEIN IBPB"/>
    <property type="match status" value="1"/>
</dbReference>
<dbReference type="Pfam" id="PF00011">
    <property type="entry name" value="HSP20"/>
    <property type="match status" value="1"/>
</dbReference>
<dbReference type="SUPFAM" id="SSF49764">
    <property type="entry name" value="HSP20-like chaperones"/>
    <property type="match status" value="1"/>
</dbReference>
<dbReference type="PROSITE" id="PS01031">
    <property type="entry name" value="SHSP"/>
    <property type="match status" value="1"/>
</dbReference>
<evidence type="ECO:0000255" key="1">
    <source>
        <dbReference type="HAMAP-Rule" id="MF_02001"/>
    </source>
</evidence>
<evidence type="ECO:0000255" key="2">
    <source>
        <dbReference type="PROSITE-ProRule" id="PRU00285"/>
    </source>
</evidence>
<keyword id="KW-0143">Chaperone</keyword>
<keyword id="KW-0963">Cytoplasm</keyword>
<keyword id="KW-0346">Stress response</keyword>
<proteinExistence type="inferred from homology"/>
<reference key="1">
    <citation type="journal article" date="2008" name="J. Bacteriol.">
        <title>The pangenome structure of Escherichia coli: comparative genomic analysis of E. coli commensal and pathogenic isolates.</title>
        <authorList>
            <person name="Rasko D.A."/>
            <person name="Rosovitz M.J."/>
            <person name="Myers G.S.A."/>
            <person name="Mongodin E.F."/>
            <person name="Fricke W.F."/>
            <person name="Gajer P."/>
            <person name="Crabtree J."/>
            <person name="Sebaihia M."/>
            <person name="Thomson N.R."/>
            <person name="Chaudhuri R."/>
            <person name="Henderson I.R."/>
            <person name="Sperandio V."/>
            <person name="Ravel J."/>
        </authorList>
    </citation>
    <scope>NUCLEOTIDE SEQUENCE [LARGE SCALE GENOMIC DNA]</scope>
    <source>
        <strain>HS</strain>
    </source>
</reference>
<gene>
    <name evidence="1" type="primary">ibpB</name>
    <name type="ordered locus">EcHS_A3898</name>
</gene>
<sequence length="142" mass="16093">MRNFDLSPLMRQWIGFDKLANALQNAGESQSFPPYNIEKSDDNHYRITLALAGFRQEDLEIQLEGTRLSVKGTPEQPKEEKKWLHQGLMNQPFSLSFTLAENMEVSGATFVNGLLHIDLIRNEPEPIAAQRIAISERPALNS</sequence>
<protein>
    <recommendedName>
        <fullName evidence="1">Small heat shock protein IbpB</fullName>
    </recommendedName>
    <alternativeName>
        <fullName evidence="1">16 kDa heat shock protein B</fullName>
    </alternativeName>
</protein>